<name>YGY9_YEAST</name>
<organism>
    <name type="scientific">Saccharomyces cerevisiae (strain ATCC 204508 / S288c)</name>
    <name type="common">Baker's yeast</name>
    <dbReference type="NCBI Taxonomy" id="559292"/>
    <lineage>
        <taxon>Eukaryota</taxon>
        <taxon>Fungi</taxon>
        <taxon>Dikarya</taxon>
        <taxon>Ascomycota</taxon>
        <taxon>Saccharomycotina</taxon>
        <taxon>Saccharomycetes</taxon>
        <taxon>Saccharomycetales</taxon>
        <taxon>Saccharomycetaceae</taxon>
        <taxon>Saccharomyces</taxon>
    </lineage>
</organism>
<gene>
    <name type="ordered locus">YGL239C</name>
    <name type="ORF">HRE104</name>
</gene>
<reference key="1">
    <citation type="journal article" date="1995" name="Yeast">
        <title>The sequence of an 11.1 kb DNA fragment between ADH4 and ADE5 on the left arm of chromosome VII, reveals the presence of eight open reading frames.</title>
        <authorList>
            <person name="Vandenbol M."/>
            <person name="Durand P."/>
            <person name="Portetelle D."/>
            <person name="Hilger F."/>
        </authorList>
    </citation>
    <scope>NUCLEOTIDE SEQUENCE [GENOMIC DNA]</scope>
    <source>
        <strain>ATCC 204508 / S288c</strain>
    </source>
</reference>
<reference key="2">
    <citation type="journal article" date="1997" name="Nature">
        <title>The nucleotide sequence of Saccharomyces cerevisiae chromosome VII.</title>
        <authorList>
            <person name="Tettelin H."/>
            <person name="Agostoni-Carbone M.L."/>
            <person name="Albermann K."/>
            <person name="Albers M."/>
            <person name="Arroyo J."/>
            <person name="Backes U."/>
            <person name="Barreiros T."/>
            <person name="Bertani I."/>
            <person name="Bjourson A.J."/>
            <person name="Brueckner M."/>
            <person name="Bruschi C.V."/>
            <person name="Carignani G."/>
            <person name="Castagnoli L."/>
            <person name="Cerdan E."/>
            <person name="Clemente M.L."/>
            <person name="Coblenz A."/>
            <person name="Coglievina M."/>
            <person name="Coissac E."/>
            <person name="Defoor E."/>
            <person name="Del Bino S."/>
            <person name="Delius H."/>
            <person name="Delneri D."/>
            <person name="de Wergifosse P."/>
            <person name="Dujon B."/>
            <person name="Durand P."/>
            <person name="Entian K.-D."/>
            <person name="Eraso P."/>
            <person name="Escribano V."/>
            <person name="Fabiani L."/>
            <person name="Fartmann B."/>
            <person name="Feroli F."/>
            <person name="Feuermann M."/>
            <person name="Frontali L."/>
            <person name="Garcia-Gonzalez M."/>
            <person name="Garcia-Saez M.I."/>
            <person name="Goffeau A."/>
            <person name="Guerreiro P."/>
            <person name="Hani J."/>
            <person name="Hansen M."/>
            <person name="Hebling U."/>
            <person name="Hernandez K."/>
            <person name="Heumann K."/>
            <person name="Hilger F."/>
            <person name="Hofmann B."/>
            <person name="Indge K.J."/>
            <person name="James C.M."/>
            <person name="Klima R."/>
            <person name="Koetter P."/>
            <person name="Kramer B."/>
            <person name="Kramer W."/>
            <person name="Lauquin G."/>
            <person name="Leuther H."/>
            <person name="Louis E.J."/>
            <person name="Maillier E."/>
            <person name="Marconi A."/>
            <person name="Martegani E."/>
            <person name="Mazon M.J."/>
            <person name="Mazzoni C."/>
            <person name="McReynolds A.D.K."/>
            <person name="Melchioretto P."/>
            <person name="Mewes H.-W."/>
            <person name="Minenkova O."/>
            <person name="Mueller-Auer S."/>
            <person name="Nawrocki A."/>
            <person name="Netter P."/>
            <person name="Neu R."/>
            <person name="Nombela C."/>
            <person name="Oliver S.G."/>
            <person name="Panzeri L."/>
            <person name="Paoluzi S."/>
            <person name="Plevani P."/>
            <person name="Portetelle D."/>
            <person name="Portillo F."/>
            <person name="Potier S."/>
            <person name="Purnelle B."/>
            <person name="Rieger M."/>
            <person name="Riles L."/>
            <person name="Rinaldi T."/>
            <person name="Robben J."/>
            <person name="Rodrigues-Pousada C."/>
            <person name="Rodriguez-Belmonte E."/>
            <person name="Rodriguez-Torres A.M."/>
            <person name="Rose M."/>
            <person name="Ruzzi M."/>
            <person name="Saliola M."/>
            <person name="Sanchez-Perez M."/>
            <person name="Schaefer B."/>
            <person name="Schaefer M."/>
            <person name="Scharfe M."/>
            <person name="Schmidheini T."/>
            <person name="Schreer A."/>
            <person name="Skala J."/>
            <person name="Souciet J.-L."/>
            <person name="Steensma H.Y."/>
            <person name="Talla E."/>
            <person name="Thierry A."/>
            <person name="Vandenbol M."/>
            <person name="van der Aart Q.J.M."/>
            <person name="Van Dyck L."/>
            <person name="Vanoni M."/>
            <person name="Verhasselt P."/>
            <person name="Voet M."/>
            <person name="Volckaert G."/>
            <person name="Wambutt R."/>
            <person name="Watson M.D."/>
            <person name="Weber N."/>
            <person name="Wedler E."/>
            <person name="Wedler H."/>
            <person name="Wipfli P."/>
            <person name="Wolf K."/>
            <person name="Wright L.F."/>
            <person name="Zaccaria P."/>
            <person name="Zimmermann M."/>
            <person name="Zollner A."/>
            <person name="Kleine K."/>
        </authorList>
    </citation>
    <scope>NUCLEOTIDE SEQUENCE [LARGE SCALE GENOMIC DNA]</scope>
    <source>
        <strain>ATCC 204508 / S288c</strain>
    </source>
</reference>
<reference key="3">
    <citation type="journal article" date="2014" name="G3 (Bethesda)">
        <title>The reference genome sequence of Saccharomyces cerevisiae: Then and now.</title>
        <authorList>
            <person name="Engel S.R."/>
            <person name="Dietrich F.S."/>
            <person name="Fisk D.G."/>
            <person name="Binkley G."/>
            <person name="Balakrishnan R."/>
            <person name="Costanzo M.C."/>
            <person name="Dwight S.S."/>
            <person name="Hitz B.C."/>
            <person name="Karra K."/>
            <person name="Nash R.S."/>
            <person name="Weng S."/>
            <person name="Wong E.D."/>
            <person name="Lloyd P."/>
            <person name="Skrzypek M.S."/>
            <person name="Miyasato S.R."/>
            <person name="Simison M."/>
            <person name="Cherry J.M."/>
        </authorList>
    </citation>
    <scope>GENOME REANNOTATION</scope>
    <source>
        <strain>ATCC 204508 / S288c</strain>
    </source>
</reference>
<reference key="4">
    <citation type="journal article" date="2007" name="Genome Res.">
        <title>Approaching a complete repository of sequence-verified protein-encoding clones for Saccharomyces cerevisiae.</title>
        <authorList>
            <person name="Hu Y."/>
            <person name="Rolfs A."/>
            <person name="Bhullar B."/>
            <person name="Murthy T.V.S."/>
            <person name="Zhu C."/>
            <person name="Berger M.F."/>
            <person name="Camargo A.A."/>
            <person name="Kelley F."/>
            <person name="McCarron S."/>
            <person name="Jepson D."/>
            <person name="Richardson A."/>
            <person name="Raphael J."/>
            <person name="Moreira D."/>
            <person name="Taycher E."/>
            <person name="Zuo D."/>
            <person name="Mohr S."/>
            <person name="Kane M.F."/>
            <person name="Williamson J."/>
            <person name="Simpson A.J.G."/>
            <person name="Bulyk M.L."/>
            <person name="Harlow E."/>
            <person name="Marsischky G."/>
            <person name="Kolodner R.D."/>
            <person name="LaBaer J."/>
        </authorList>
    </citation>
    <scope>NUCLEOTIDE SEQUENCE [GENOMIC DNA]</scope>
    <source>
        <strain>ATCC 204508 / S288c</strain>
    </source>
</reference>
<accession>P53069</accession>
<proteinExistence type="uncertain"/>
<comment type="subcellular location">
    <subcellularLocation>
        <location evidence="2">Membrane</location>
        <topology evidence="2">Single-pass membrane protein</topology>
    </subcellularLocation>
</comment>
<comment type="miscellaneous">
    <text evidence="2">Partially overlaps CSE1.</text>
</comment>
<comment type="caution">
    <text evidence="3">Product of a dubious gene prediction unlikely to encode a functional protein. Because of that it is not part of the S.cerevisiae S288c complete/reference proteome set.</text>
</comment>
<keyword id="KW-0472">Membrane</keyword>
<keyword id="KW-0812">Transmembrane</keyword>
<keyword id="KW-1133">Transmembrane helix</keyword>
<protein>
    <recommendedName>
        <fullName>Putative uncharacterized protein YGL239C</fullName>
    </recommendedName>
</protein>
<feature type="chain" id="PRO_0000202709" description="Putative uncharacterized protein YGL239C">
    <location>
        <begin position="1"/>
        <end position="104"/>
    </location>
</feature>
<feature type="transmembrane region" description="Helical" evidence="1">
    <location>
        <begin position="80"/>
        <end position="98"/>
    </location>
</feature>
<evidence type="ECO:0000255" key="1"/>
<evidence type="ECO:0000305" key="2"/>
<evidence type="ECO:0000305" key="3">
    <source>
    </source>
</evidence>
<dbReference type="EMBL" id="Z49149">
    <property type="protein sequence ID" value="CAA89017.1"/>
    <property type="molecule type" value="Genomic_DNA"/>
</dbReference>
<dbReference type="EMBL" id="Z72761">
    <property type="protein sequence ID" value="CAA96956.1"/>
    <property type="molecule type" value="Genomic_DNA"/>
</dbReference>
<dbReference type="EMBL" id="AY558268">
    <property type="protein sequence ID" value="AAS56594.1"/>
    <property type="molecule type" value="Genomic_DNA"/>
</dbReference>
<dbReference type="PIR" id="S53942">
    <property type="entry name" value="S53942"/>
</dbReference>
<dbReference type="DIP" id="DIP-1820N"/>
<dbReference type="IntAct" id="P53069">
    <property type="interactions" value="2"/>
</dbReference>
<dbReference type="MINT" id="P53069"/>
<dbReference type="PaxDb" id="4932-YGL239C"/>
<dbReference type="EnsemblFungi" id="YGL239C_mRNA">
    <property type="protein sequence ID" value="YGL239C"/>
    <property type="gene ID" value="YGL239C"/>
</dbReference>
<dbReference type="AGR" id="SGD:S000003208"/>
<dbReference type="SGD" id="S000003208">
    <property type="gene designation" value="YGL239C"/>
</dbReference>
<dbReference type="HOGENOM" id="CLU_2252157_0_0_1"/>
<dbReference type="GO" id="GO:0016020">
    <property type="term" value="C:membrane"/>
    <property type="evidence" value="ECO:0007669"/>
    <property type="project" value="UniProtKB-SubCell"/>
</dbReference>
<sequence length="104" mass="11409">MKFLKNKAPANLVDNGRFVEAITCNKVKPNPSCVSNCLKFLSEVLAVEAITDSARNLATVSKSDILLFSLLQLSSNKQSGSSLPLFDLVFILLSTFFLFHNPCN</sequence>